<proteinExistence type="inferred from homology"/>
<accession>Q68XB9</accession>
<sequence>MRQKTSSNKKKQKNTNNISLRRKLGLMYKKAILGLKIVLMIFVCLFVFTKYFTSIKTYLITNIYQITTKLGFRLENVIIEGQQNVDELTILKVLNANKRSSIFALKLDEISNNLKKSKWIKEVYVSRRLPNTVYIKLFEREPIAIWQINNQLFLVDEEGYKISKDIQPFSHLLHVVGEGANIYASQLVLELKKYPALLNKTLVAIRVGDRRWDLNLKGNISIKLPEKEFEAALKYIDALNKNNRLFNQNYKALDLRDRNKYYIQKY</sequence>
<organism>
    <name type="scientific">Rickettsia typhi (strain ATCC VR-144 / Wilmington)</name>
    <dbReference type="NCBI Taxonomy" id="257363"/>
    <lineage>
        <taxon>Bacteria</taxon>
        <taxon>Pseudomonadati</taxon>
        <taxon>Pseudomonadota</taxon>
        <taxon>Alphaproteobacteria</taxon>
        <taxon>Rickettsiales</taxon>
        <taxon>Rickettsiaceae</taxon>
        <taxon>Rickettsieae</taxon>
        <taxon>Rickettsia</taxon>
        <taxon>typhus group</taxon>
    </lineage>
</organism>
<name>FTSQ_RICTY</name>
<comment type="function">
    <text evidence="1">Essential cell division protein.</text>
</comment>
<comment type="subcellular location">
    <subcellularLocation>
        <location evidence="1">Cell inner membrane</location>
        <topology evidence="1">Single-pass type II membrane protein</topology>
    </subcellularLocation>
    <text evidence="1">Localizes to the division septum.</text>
</comment>
<comment type="similarity">
    <text evidence="1">Belongs to the FtsQ/DivIB family. FtsQ subfamily.</text>
</comment>
<feature type="chain" id="PRO_0000280972" description="Cell division protein FtsQ">
    <location>
        <begin position="1"/>
        <end position="266"/>
    </location>
</feature>
<feature type="topological domain" description="Cytoplasmic" evidence="1">
    <location>
        <begin position="1"/>
        <end position="31"/>
    </location>
</feature>
<feature type="transmembrane region" description="Helical" evidence="1">
    <location>
        <begin position="32"/>
        <end position="52"/>
    </location>
</feature>
<feature type="topological domain" description="Periplasmic" evidence="1">
    <location>
        <begin position="53"/>
        <end position="266"/>
    </location>
</feature>
<feature type="domain" description="POTRA" evidence="2">
    <location>
        <begin position="72"/>
        <end position="140"/>
    </location>
</feature>
<dbReference type="EMBL" id="AE017197">
    <property type="protein sequence ID" value="AAU03723.1"/>
    <property type="molecule type" value="Genomic_DNA"/>
</dbReference>
<dbReference type="RefSeq" id="WP_011190708.1">
    <property type="nucleotide sequence ID" value="NC_006142.1"/>
</dbReference>
<dbReference type="SMR" id="Q68XB9"/>
<dbReference type="KEGG" id="rty:RT0242"/>
<dbReference type="eggNOG" id="COG1589">
    <property type="taxonomic scope" value="Bacteria"/>
</dbReference>
<dbReference type="HOGENOM" id="CLU_061141_2_1_5"/>
<dbReference type="OrthoDB" id="9783091at2"/>
<dbReference type="Proteomes" id="UP000000604">
    <property type="component" value="Chromosome"/>
</dbReference>
<dbReference type="GO" id="GO:0032153">
    <property type="term" value="C:cell division site"/>
    <property type="evidence" value="ECO:0007669"/>
    <property type="project" value="UniProtKB-UniRule"/>
</dbReference>
<dbReference type="GO" id="GO:0005886">
    <property type="term" value="C:plasma membrane"/>
    <property type="evidence" value="ECO:0007669"/>
    <property type="project" value="UniProtKB-SubCell"/>
</dbReference>
<dbReference type="GO" id="GO:0090529">
    <property type="term" value="P:cell septum assembly"/>
    <property type="evidence" value="ECO:0007669"/>
    <property type="project" value="InterPro"/>
</dbReference>
<dbReference type="GO" id="GO:0043093">
    <property type="term" value="P:FtsZ-dependent cytokinesis"/>
    <property type="evidence" value="ECO:0007669"/>
    <property type="project" value="UniProtKB-UniRule"/>
</dbReference>
<dbReference type="Gene3D" id="3.10.20.310">
    <property type="entry name" value="membrane protein fhac"/>
    <property type="match status" value="1"/>
</dbReference>
<dbReference type="HAMAP" id="MF_00911">
    <property type="entry name" value="FtsQ_subfam"/>
    <property type="match status" value="1"/>
</dbReference>
<dbReference type="InterPro" id="IPR005548">
    <property type="entry name" value="Cell_div_FtsQ/DivIB_C"/>
</dbReference>
<dbReference type="InterPro" id="IPR026579">
    <property type="entry name" value="FtsQ"/>
</dbReference>
<dbReference type="InterPro" id="IPR034746">
    <property type="entry name" value="POTRA"/>
</dbReference>
<dbReference type="InterPro" id="IPR013685">
    <property type="entry name" value="POTRA_FtsQ_type"/>
</dbReference>
<dbReference type="PANTHER" id="PTHR35851">
    <property type="entry name" value="CELL DIVISION PROTEIN FTSQ"/>
    <property type="match status" value="1"/>
</dbReference>
<dbReference type="PANTHER" id="PTHR35851:SF1">
    <property type="entry name" value="CELL DIVISION PROTEIN FTSQ"/>
    <property type="match status" value="1"/>
</dbReference>
<dbReference type="Pfam" id="PF03799">
    <property type="entry name" value="FtsQ_DivIB_C"/>
    <property type="match status" value="1"/>
</dbReference>
<dbReference type="Pfam" id="PF08478">
    <property type="entry name" value="POTRA_1"/>
    <property type="match status" value="1"/>
</dbReference>
<dbReference type="PROSITE" id="PS51779">
    <property type="entry name" value="POTRA"/>
    <property type="match status" value="1"/>
</dbReference>
<evidence type="ECO:0000255" key="1">
    <source>
        <dbReference type="HAMAP-Rule" id="MF_00911"/>
    </source>
</evidence>
<evidence type="ECO:0000255" key="2">
    <source>
        <dbReference type="PROSITE-ProRule" id="PRU01115"/>
    </source>
</evidence>
<keyword id="KW-0131">Cell cycle</keyword>
<keyword id="KW-0132">Cell division</keyword>
<keyword id="KW-0997">Cell inner membrane</keyword>
<keyword id="KW-1003">Cell membrane</keyword>
<keyword id="KW-0472">Membrane</keyword>
<keyword id="KW-0812">Transmembrane</keyword>
<keyword id="KW-1133">Transmembrane helix</keyword>
<protein>
    <recommendedName>
        <fullName evidence="1">Cell division protein FtsQ</fullName>
    </recommendedName>
</protein>
<gene>
    <name evidence="1" type="primary">ftsQ</name>
    <name type="ordered locus">RT0242</name>
</gene>
<reference key="1">
    <citation type="journal article" date="2004" name="J. Bacteriol.">
        <title>Complete genome sequence of Rickettsia typhi and comparison with sequences of other Rickettsiae.</title>
        <authorList>
            <person name="McLeod M.P."/>
            <person name="Qin X."/>
            <person name="Karpathy S.E."/>
            <person name="Gioia J."/>
            <person name="Highlander S.K."/>
            <person name="Fox G.E."/>
            <person name="McNeill T.Z."/>
            <person name="Jiang H."/>
            <person name="Muzny D."/>
            <person name="Jacob L.S."/>
            <person name="Hawes A.C."/>
            <person name="Sodergren E."/>
            <person name="Gill R."/>
            <person name="Hume J."/>
            <person name="Morgan M."/>
            <person name="Fan G."/>
            <person name="Amin A.G."/>
            <person name="Gibbs R.A."/>
            <person name="Hong C."/>
            <person name="Yu X.-J."/>
            <person name="Walker D.H."/>
            <person name="Weinstock G.M."/>
        </authorList>
    </citation>
    <scope>NUCLEOTIDE SEQUENCE [LARGE SCALE GENOMIC DNA]</scope>
    <source>
        <strain>ATCC VR-144 / Wilmington</strain>
    </source>
</reference>